<reference key="1">
    <citation type="journal article" date="1994" name="J. Cell Biol.">
        <title>Cytoplasmic dynein and actin-related protein Arp1 are required for normal nuclear distribution in filamentous fungi.</title>
        <authorList>
            <person name="Plamann M."/>
            <person name="Minke P.F."/>
            <person name="Tinsley J.H."/>
            <person name="Bruno K.S."/>
        </authorList>
    </citation>
    <scope>NUCLEOTIDE SEQUENCE [GENOMIC DNA]</scope>
    <source>
        <strain>ATCC 24698 / 74-OR23-1A / CBS 708.71 / DSM 1257 / FGSC 987</strain>
    </source>
</reference>
<reference key="2">
    <citation type="journal article" date="2003" name="Nature">
        <title>The genome sequence of the filamentous fungus Neurospora crassa.</title>
        <authorList>
            <person name="Galagan J.E."/>
            <person name="Calvo S.E."/>
            <person name="Borkovich K.A."/>
            <person name="Selker E.U."/>
            <person name="Read N.D."/>
            <person name="Jaffe D.B."/>
            <person name="FitzHugh W."/>
            <person name="Ma L.-J."/>
            <person name="Smirnov S."/>
            <person name="Purcell S."/>
            <person name="Rehman B."/>
            <person name="Elkins T."/>
            <person name="Engels R."/>
            <person name="Wang S."/>
            <person name="Nielsen C.B."/>
            <person name="Butler J."/>
            <person name="Endrizzi M."/>
            <person name="Qui D."/>
            <person name="Ianakiev P."/>
            <person name="Bell-Pedersen D."/>
            <person name="Nelson M.A."/>
            <person name="Werner-Washburne M."/>
            <person name="Selitrennikoff C.P."/>
            <person name="Kinsey J.A."/>
            <person name="Braun E.L."/>
            <person name="Zelter A."/>
            <person name="Schulte U."/>
            <person name="Kothe G.O."/>
            <person name="Jedd G."/>
            <person name="Mewes H.-W."/>
            <person name="Staben C."/>
            <person name="Marcotte E."/>
            <person name="Greenberg D."/>
            <person name="Roy A."/>
            <person name="Foley K."/>
            <person name="Naylor J."/>
            <person name="Stange-Thomann N."/>
            <person name="Barrett R."/>
            <person name="Gnerre S."/>
            <person name="Kamal M."/>
            <person name="Kamvysselis M."/>
            <person name="Mauceli E.W."/>
            <person name="Bielke C."/>
            <person name="Rudd S."/>
            <person name="Frishman D."/>
            <person name="Krystofova S."/>
            <person name="Rasmussen C."/>
            <person name="Metzenberg R.L."/>
            <person name="Perkins D.D."/>
            <person name="Kroken S."/>
            <person name="Cogoni C."/>
            <person name="Macino G."/>
            <person name="Catcheside D.E.A."/>
            <person name="Li W."/>
            <person name="Pratt R.J."/>
            <person name="Osmani S.A."/>
            <person name="DeSouza C.P.C."/>
            <person name="Glass N.L."/>
            <person name="Orbach M.J."/>
            <person name="Berglund J.A."/>
            <person name="Voelker R."/>
            <person name="Yarden O."/>
            <person name="Plamann M."/>
            <person name="Seiler S."/>
            <person name="Dunlap J.C."/>
            <person name="Radford A."/>
            <person name="Aramayo R."/>
            <person name="Natvig D.O."/>
            <person name="Alex L.A."/>
            <person name="Mannhaupt G."/>
            <person name="Ebbole D.J."/>
            <person name="Freitag M."/>
            <person name="Paulsen I."/>
            <person name="Sachs M.S."/>
            <person name="Lander E.S."/>
            <person name="Nusbaum C."/>
            <person name="Birren B.W."/>
        </authorList>
    </citation>
    <scope>NUCLEOTIDE SEQUENCE [LARGE SCALE GENOMIC DNA]</scope>
    <source>
        <strain>ATCC 24698 / 74-OR23-1A / CBS 708.71 / DSM 1257 / FGSC 987</strain>
    </source>
</reference>
<protein>
    <recommendedName>
        <fullName>Dynein heavy chain, cytoplasmic</fullName>
    </recommendedName>
    <alternativeName>
        <fullName>Dynein heavy chain, cytosolic</fullName>
        <shortName>DYHC</shortName>
    </alternativeName>
    <alternativeName>
        <fullName>Ropy-1</fullName>
    </alternativeName>
</protein>
<dbReference type="EMBL" id="L31504">
    <property type="protein sequence ID" value="AAA64908.1"/>
    <property type="molecule type" value="Genomic_DNA"/>
</dbReference>
<dbReference type="EMBL" id="CM002239">
    <property type="protein sequence ID" value="ESA43035.1"/>
    <property type="molecule type" value="Genomic_DNA"/>
</dbReference>
<dbReference type="EMBL" id="CM002239">
    <property type="protein sequence ID" value="ESA43036.1"/>
    <property type="molecule type" value="Genomic_DNA"/>
</dbReference>
<dbReference type="PIR" id="B54802">
    <property type="entry name" value="B54802"/>
</dbReference>
<dbReference type="RefSeq" id="XP_011394207.1">
    <property type="nucleotide sequence ID" value="XM_011395905.1"/>
</dbReference>
<dbReference type="RefSeq" id="XP_011394208.1">
    <property type="nucleotide sequence ID" value="XM_011395906.1"/>
</dbReference>
<dbReference type="SMR" id="P45443"/>
<dbReference type="FunCoup" id="P45443">
    <property type="interactions" value="706"/>
</dbReference>
<dbReference type="STRING" id="367110.P45443"/>
<dbReference type="PaxDb" id="5141-EFNCRP00000007047"/>
<dbReference type="EnsemblFungi" id="ESA43035">
    <property type="protein sequence ID" value="ESA43035"/>
    <property type="gene ID" value="NCU06976"/>
</dbReference>
<dbReference type="EnsemblFungi" id="ESA43036">
    <property type="protein sequence ID" value="ESA43036"/>
    <property type="gene ID" value="NCU06976"/>
</dbReference>
<dbReference type="GeneID" id="3878786"/>
<dbReference type="KEGG" id="ncr:NCU06976"/>
<dbReference type="VEuPathDB" id="FungiDB:NCU06976"/>
<dbReference type="HOGENOM" id="CLU_000038_7_0_1"/>
<dbReference type="InParanoid" id="P45443"/>
<dbReference type="OMA" id="NERQMTR"/>
<dbReference type="OrthoDB" id="447173at2759"/>
<dbReference type="Proteomes" id="UP000001805">
    <property type="component" value="Chromosome 4, Linkage Group IV"/>
</dbReference>
<dbReference type="GO" id="GO:0005938">
    <property type="term" value="C:cell cortex"/>
    <property type="evidence" value="ECO:0000318"/>
    <property type="project" value="GO_Central"/>
</dbReference>
<dbReference type="GO" id="GO:0005868">
    <property type="term" value="C:cytoplasmic dynein complex"/>
    <property type="evidence" value="ECO:0000318"/>
    <property type="project" value="GO_Central"/>
</dbReference>
<dbReference type="GO" id="GO:0005881">
    <property type="term" value="C:cytoplasmic microtubule"/>
    <property type="evidence" value="ECO:0000318"/>
    <property type="project" value="GO_Central"/>
</dbReference>
<dbReference type="GO" id="GO:0005524">
    <property type="term" value="F:ATP binding"/>
    <property type="evidence" value="ECO:0007669"/>
    <property type="project" value="UniProtKB-KW"/>
</dbReference>
<dbReference type="GO" id="GO:0016887">
    <property type="term" value="F:ATP hydrolysis activity"/>
    <property type="evidence" value="ECO:0007669"/>
    <property type="project" value="InterPro"/>
</dbReference>
<dbReference type="GO" id="GO:0045505">
    <property type="term" value="F:dynein intermediate chain binding"/>
    <property type="evidence" value="ECO:0000318"/>
    <property type="project" value="GO_Central"/>
</dbReference>
<dbReference type="GO" id="GO:0051959">
    <property type="term" value="F:dynein light intermediate chain binding"/>
    <property type="evidence" value="ECO:0000318"/>
    <property type="project" value="GO_Central"/>
</dbReference>
<dbReference type="GO" id="GO:0008569">
    <property type="term" value="F:minus-end-directed microtubule motor activity"/>
    <property type="evidence" value="ECO:0000318"/>
    <property type="project" value="GO_Central"/>
</dbReference>
<dbReference type="GO" id="GO:0031122">
    <property type="term" value="P:cytoplasmic microtubule organization"/>
    <property type="evidence" value="ECO:0000318"/>
    <property type="project" value="GO_Central"/>
</dbReference>
<dbReference type="GO" id="GO:0007018">
    <property type="term" value="P:microtubule-based movement"/>
    <property type="evidence" value="ECO:0007669"/>
    <property type="project" value="InterPro"/>
</dbReference>
<dbReference type="GO" id="GO:0007052">
    <property type="term" value="P:mitotic spindle organization"/>
    <property type="evidence" value="ECO:0000318"/>
    <property type="project" value="GO_Central"/>
</dbReference>
<dbReference type="GO" id="GO:0007097">
    <property type="term" value="P:nuclear migration"/>
    <property type="evidence" value="ECO:0000318"/>
    <property type="project" value="GO_Central"/>
</dbReference>
<dbReference type="CDD" id="cd00009">
    <property type="entry name" value="AAA"/>
    <property type="match status" value="2"/>
</dbReference>
<dbReference type="FunFam" id="1.20.920.20:FF:000002">
    <property type="entry name" value="Cytoplasmic dynein 1 heavy chain"/>
    <property type="match status" value="1"/>
</dbReference>
<dbReference type="FunFam" id="3.40.50.300:FF:000122">
    <property type="entry name" value="Cytoplasmic dynein 1 heavy chain"/>
    <property type="match status" value="1"/>
</dbReference>
<dbReference type="FunFam" id="1.10.287.2620:FF:000001">
    <property type="entry name" value="Cytoplasmic dynein heavy chain 1"/>
    <property type="match status" value="1"/>
</dbReference>
<dbReference type="FunFam" id="1.10.8.710:FF:000005">
    <property type="entry name" value="Cytoplasmic dynein heavy chain 1"/>
    <property type="match status" value="1"/>
</dbReference>
<dbReference type="FunFam" id="1.20.140.100:FF:000002">
    <property type="entry name" value="Cytoplasmic dynein heavy chain 1"/>
    <property type="match status" value="1"/>
</dbReference>
<dbReference type="FunFam" id="1.20.58.1120:FF:000003">
    <property type="entry name" value="Cytoplasmic dynein heavy chain 1"/>
    <property type="match status" value="1"/>
</dbReference>
<dbReference type="FunFam" id="1.20.920.30:FF:000001">
    <property type="entry name" value="Cytoplasmic dynein heavy chain 1"/>
    <property type="match status" value="1"/>
</dbReference>
<dbReference type="FunFam" id="3.20.180.20:FF:000002">
    <property type="entry name" value="Cytoplasmic dynein heavy chain 1"/>
    <property type="match status" value="1"/>
</dbReference>
<dbReference type="FunFam" id="3.40.50.300:FF:000071">
    <property type="entry name" value="Cytoplasmic dynein heavy chain 1"/>
    <property type="match status" value="1"/>
</dbReference>
<dbReference type="FunFam" id="3.40.50.300:FF:000517">
    <property type="entry name" value="Cytoplasmic dynein heavy chain 1"/>
    <property type="match status" value="1"/>
</dbReference>
<dbReference type="FunFam" id="1.10.8.720:FF:000003">
    <property type="entry name" value="Cytoplasmic dynein heavy chain 2"/>
    <property type="match status" value="1"/>
</dbReference>
<dbReference type="FunFam" id="1.10.472.130:FF:000007">
    <property type="entry name" value="Dynein heavy chain, cytoplasmic"/>
    <property type="match status" value="1"/>
</dbReference>
<dbReference type="FunFam" id="1.10.8.1220:FF:000004">
    <property type="entry name" value="Dynein heavy chain, cytoplasmic"/>
    <property type="match status" value="1"/>
</dbReference>
<dbReference type="FunFam" id="3.40.50.300:FF:000075">
    <property type="entry name" value="Dynein heavy chain, cytoplasmic"/>
    <property type="match status" value="1"/>
</dbReference>
<dbReference type="FunFam" id="3.40.50.300:FF:000829">
    <property type="entry name" value="Dynein heavy chain, cytoplasmic"/>
    <property type="match status" value="1"/>
</dbReference>
<dbReference type="Gene3D" id="1.10.287.2620">
    <property type="match status" value="1"/>
</dbReference>
<dbReference type="Gene3D" id="1.10.472.130">
    <property type="match status" value="1"/>
</dbReference>
<dbReference type="Gene3D" id="1.10.8.1220">
    <property type="match status" value="1"/>
</dbReference>
<dbReference type="Gene3D" id="1.10.8.710">
    <property type="match status" value="1"/>
</dbReference>
<dbReference type="Gene3D" id="1.20.58.1120">
    <property type="match status" value="1"/>
</dbReference>
<dbReference type="Gene3D" id="1.20.920.20">
    <property type="match status" value="1"/>
</dbReference>
<dbReference type="Gene3D" id="1.20.920.30">
    <property type="match status" value="1"/>
</dbReference>
<dbReference type="Gene3D" id="6.10.140.1060">
    <property type="match status" value="1"/>
</dbReference>
<dbReference type="Gene3D" id="1.20.140.100">
    <property type="entry name" value="Dynein heavy chain, N-terminal domain 2"/>
    <property type="match status" value="1"/>
</dbReference>
<dbReference type="Gene3D" id="3.20.180.20">
    <property type="entry name" value="Dynein heavy chain, N-terminal domain 2"/>
    <property type="match status" value="1"/>
</dbReference>
<dbReference type="Gene3D" id="3.40.50.300">
    <property type="entry name" value="P-loop containing nucleotide triphosphate hydrolases"/>
    <property type="match status" value="5"/>
</dbReference>
<dbReference type="Gene3D" id="1.10.8.720">
    <property type="entry name" value="Region D6 of dynein motor"/>
    <property type="match status" value="1"/>
</dbReference>
<dbReference type="InterPro" id="IPR003593">
    <property type="entry name" value="AAA+_ATPase"/>
</dbReference>
<dbReference type="InterPro" id="IPR035699">
    <property type="entry name" value="AAA_6"/>
</dbReference>
<dbReference type="InterPro" id="IPR035706">
    <property type="entry name" value="AAA_9"/>
</dbReference>
<dbReference type="InterPro" id="IPR041658">
    <property type="entry name" value="AAA_lid_11"/>
</dbReference>
<dbReference type="InterPro" id="IPR042219">
    <property type="entry name" value="AAA_lid_11_sf"/>
</dbReference>
<dbReference type="InterPro" id="IPR026983">
    <property type="entry name" value="DHC"/>
</dbReference>
<dbReference type="InterPro" id="IPR054354">
    <property type="entry name" value="DYNC2H1-like_lid"/>
</dbReference>
<dbReference type="InterPro" id="IPR042222">
    <property type="entry name" value="Dynein_2_N"/>
</dbReference>
<dbReference type="InterPro" id="IPR043157">
    <property type="entry name" value="Dynein_AAA1S"/>
</dbReference>
<dbReference type="InterPro" id="IPR041466">
    <property type="entry name" value="Dynein_AAA5_ext"/>
</dbReference>
<dbReference type="InterPro" id="IPR024743">
    <property type="entry name" value="Dynein_HC_stalk"/>
</dbReference>
<dbReference type="InterPro" id="IPR024317">
    <property type="entry name" value="Dynein_heavy_chain_D4_dom"/>
</dbReference>
<dbReference type="InterPro" id="IPR004273">
    <property type="entry name" value="Dynein_heavy_D6_P-loop"/>
</dbReference>
<dbReference type="InterPro" id="IPR013602">
    <property type="entry name" value="Dynein_heavy_linker"/>
</dbReference>
<dbReference type="InterPro" id="IPR013594">
    <property type="entry name" value="Dynein_heavy_tail"/>
</dbReference>
<dbReference type="InterPro" id="IPR042228">
    <property type="entry name" value="Dynein_linker_3"/>
</dbReference>
<dbReference type="InterPro" id="IPR027417">
    <property type="entry name" value="P-loop_NTPase"/>
</dbReference>
<dbReference type="PANTHER" id="PTHR46532:SF4">
    <property type="entry name" value="AAA+ ATPASE DOMAIN-CONTAINING PROTEIN"/>
    <property type="match status" value="1"/>
</dbReference>
<dbReference type="PANTHER" id="PTHR46532">
    <property type="entry name" value="MALE FERTILITY FACTOR KL5"/>
    <property type="match status" value="1"/>
</dbReference>
<dbReference type="Pfam" id="PF12774">
    <property type="entry name" value="AAA_6"/>
    <property type="match status" value="1"/>
</dbReference>
<dbReference type="Pfam" id="PF12775">
    <property type="entry name" value="AAA_7"/>
    <property type="match status" value="1"/>
</dbReference>
<dbReference type="Pfam" id="PF12780">
    <property type="entry name" value="AAA_8"/>
    <property type="match status" value="1"/>
</dbReference>
<dbReference type="Pfam" id="PF12781">
    <property type="entry name" value="AAA_9"/>
    <property type="match status" value="1"/>
</dbReference>
<dbReference type="Pfam" id="PF18198">
    <property type="entry name" value="AAA_lid_11"/>
    <property type="match status" value="1"/>
</dbReference>
<dbReference type="Pfam" id="PF08385">
    <property type="entry name" value="DHC_N1"/>
    <property type="match status" value="1"/>
</dbReference>
<dbReference type="Pfam" id="PF08393">
    <property type="entry name" value="DHC_N2"/>
    <property type="match status" value="1"/>
</dbReference>
<dbReference type="Pfam" id="PF22597">
    <property type="entry name" value="DYN_lid"/>
    <property type="match status" value="1"/>
</dbReference>
<dbReference type="Pfam" id="PF17852">
    <property type="entry name" value="Dynein_AAA_lid"/>
    <property type="match status" value="1"/>
</dbReference>
<dbReference type="Pfam" id="PF03028">
    <property type="entry name" value="Dynein_heavy"/>
    <property type="match status" value="1"/>
</dbReference>
<dbReference type="Pfam" id="PF12777">
    <property type="entry name" value="MT"/>
    <property type="match status" value="1"/>
</dbReference>
<dbReference type="SMART" id="SM00382">
    <property type="entry name" value="AAA"/>
    <property type="match status" value="3"/>
</dbReference>
<dbReference type="SUPFAM" id="SSF52540">
    <property type="entry name" value="P-loop containing nucleoside triphosphate hydrolases"/>
    <property type="match status" value="4"/>
</dbReference>
<sequence length="4367" mass="495578">MMDSVPSPPPQPSPDANGVATTPFAAVDPVKVVDHLVLLLEATLGAKRDELEAPGSLLSKVRYSDTVQRCSRFALDTQVALYIQKDLAPTTTLDGDNGAEAEEPEPTHVYTISSDLTSSPTTVAYLVLLKRPQPLDPIVPLTSQIQMLNLPGPAYLSTSGSEQGPTSSPYEILQLYLHNGLAPYFDASTKSQQLLNGARGRPDVDAKTGIPVTKKRWTELELSLSHLQQNVEIPEVSLPFHPLVQSTLEEAATKNVKPSIDLLPATVLADSTFLNNLQATVNNWIKSIQVITKMTRDPTTGTANQEINFWLSMEAALEGIENQLRSEGVMLTLDILKHAKRFQATVSFTADTGLKEAMEKVQKYNQLMRDFPLDELLSATTLTKVQESIGQIFGHLNKKLRICPYPIRRALPLVEAISGDLDEVLHRLLPGTELVKLDYEEFKGVMKQAGSIFRAWDESIKEFTNVAREVTRRRNEKFIPIKINPRHAELQSRLDYVHNFRDNHEQLQRTIINVLGPKATVNGIVTASGANGVAVVEEIGDVDAVDEVKQAWEALKDVDLLDCTREGTEKWVRAENIYNERTARVENSIIARLRDRLATAKNANEMFRVFSKFNALFVRPKIRGAIAEYQTQLIDNVKQAISSLHERFKQQYGHSEAHAMAQLHDLPPVSGAIIWARQIERQLDQYMKKVEQVLGSDWALHTEGQKLQNESDLFRKKLDTRPIFEAWLHDVQRKQISISGLLFTINRIRSAGNILELAVNFDAQVIALFKETRNLLWLNYPVPHSVNNVAKEAKRVYPFAVSLMESVRTFAQTNRQISDMSEVAVLLSGHRNDVYTLISKGIPLRWETFVNTYEVHFKPTFNPNTPLGQTGSKVSETKHVMFIREFAASVSLLQSKTLLLANIYVTVQKALNELKTCPYEASAFQSRLETIQHAVDQLNLEQYVNLGYWVERMNRQIKDVLYTRLQVAIQAWIQAFEDEDVERPSERKRLLEIASPDAAKSIGPVIKSLVHEITMRNQVIYLDPPLEYARASWFAQLQDWIGVICNLKKIKATRYTMSLSTEVVDEPRFNDLPGDCTEELLRVQTSVEKKIREIGAYVDKWLQFQSLWDLQSEHVYDVLGDQLSRWLQLLQEIRKTRQTFDTTEVSRSFGHITIDYDQVQTKVNAKYDQWQQDILIKFASRLGNRMREVYAELEKARKDLEGQAMTANSTAEAVRFITIVQSCTRQVKLWAPEIETFRQGESTLVRQRYHFQNDWLHAEQVDGMWDMLNELLARKSKIVTDQSDALRAKITAEDKVVNDKIAEIAHQWNEEKPVSGTIAPDVASATLTHFEQRITKLQEESAMVAKAKEALDLAPTPDTSLGVILEEVQDFKSVWASLSTIWKNLNELRETLWNSVQPRKIRASIDNLIKMTKEMPSRMRQYAAFEHIQNVLRQLMKVNSILGELKSEAVRDRHWTKIYKQIKPGKRYSPVSMTLGDVWDLNLVATEVIVKDIIIQAQGEMALEEFLKQVRETWTNYGLELVQYQQKCRLIRGWDDLFAKCSENLNSLQAMKHSPYYKEFEEEASSWEEKLNRVHVLFDIWIDVQRQWVYLEGVFHGNADIKHLLPIESSRFQNINSEFLAVMKKVYKQPNVLDVLNIPNVQKSLERLAELLNKIQKALGEYLEKERVSFPRFYFVGDEDLLEMIGNSNDTMRIAKHFKKMFAGLNGLVMDDEGVISGFTSKEGETVRLKKEINLVKTPRINDWLALLENGMKVTLAELLAEAVDEFTPIFSSENVDRDALIKFMNTYPSQIVVLATQVVWTTAVDQALADGGKDLQLLFDREVQVLRMLADTVLGDLEVLLRKKCEQLITECVHQRDVIEKLVKLNANSNTHYMWLLQMRYVYNPEGDFLQRLHIKMANAKLNYGFEYLGVPDRLVRTPLTDRCFLTLTQALCQRLGGSPYGPAGTGKTESVKALGLQLGRFTLVFCCDDTFDNQAMGRIFLGICQVGAWGCFDEFNRLEEKILSAVSQQIQDIQLGLKMGAEDEKAQIELDGRQIHVNANAGIFITMNPGYAGRSNLPDNLKKLFRSVAMSKPDKELIAEVMLYSQGFNQAKQLSKHTVPFFDQCSEKLSKQAHYDFGLRALKSVLVSSGGLKRARLLETGDAESLGPEDVVEPEIIVQSIRETIAPKLIKSDVEIMMEIESVCFPGVKYVPASLEKLQEAIRRLAAERQLVVNDIWMTKVLQLYQIQKIHHGVMMVGNSGSGKSAAWRLLLDALQQTENVEGVSHVIDSKVMSKEALYGNLDSTTREWTDGLFTSILRKIVDNLRGEDAKRHWIVFDGDVDPEWVENLNSVLDDNKLLTLPNGERLNLPPNVRIMFEVENLKYATLATVSRCGMVWFSEDTVTPDMMVSNYIETLRTVAFEDLDEDAVATGQSSAKALAVQSQAADLLQEFLTRDNLINEVLKEAANYEHIMEFTVARVLSTLFSLLNKAVRDIIEYNSAHVDFPMDPEQVEGYIAKKVLLALVWALTGDCPLKDRKAFGDKVAGLASFGSPPLDGTSSLIDFTVTMPQGEWQTWQQHVPTIEVNTHSVTQTDVVIPTLDTIRHEDVLYSWLAEHKPLLLCGPPGSGKTMTLFSALRKLPNMEVVGLNFSSATTPDLLIKTFEQYCEYKKTLNGVMLSPTQIGRWLVIFCDEINLPAPDKYGTQRAISFLRQLVEHNGFWRTSDKAWVTLDRIQFVGACNPPTDAGRTPMGARFLRHAPLIMVDYPGELSLMQIYGSFNAAVLKVIPSLRGYAEALTQAMVRFYLESQERFTPKIQPHYVYSPRELTRWVRGVYEAIRPLETLSVEGLIRIWAHEALRLFQDRLVDEEERKWTDDAVRRIAMEYFPTIDEHKALGGPILFSNWLSKNYVPVDREQLRDFVKARLKTFCEEEVDVPLILFNDVLEHVLRIDRVFRQPQGHLILIGVSGSGKTTLSRFVAWMNGLKVFQIKVHGKYSAEDFDEDLREVLRRCGCKGEKICFIMDESNVLDSGFLERMNTLLANAEVPGLFEGDDLAALMTACKEGAQRQGLLLDSQEELYKWFTGQIVKNLHVVFTMNPPGEDGLSSKAATSPALFNRCVLNWFGDWSDQALFQVAHELTHSVDLDRPNWTAPDTIPVAYRGLNLPPSHREAVVNAMVYIHYSLQRFNAKLLKQQGKITFLTPRHFLDFVAQYVKLYNEKREDLEEQQRHLNVGLEKLRDTVDKVRDLRVTLSEKKAQLEQKDAEANEKLQRMVADQREAEQRKNISLEIQAALEKQEAEVASRKKVVLEDLARAEPAVEEAKASVSSIKRQHLTEVRSMPTPPSGVKLALESVCTLIGHKANDWKTIQGIVRRDDFIASIVNFNNEKQMTKSLRVKMRNEFLANPEFTFEKVNRASKACGPLVQWVEAQVNYAEILDRVGPLREEVMLLEEQALQTKAEAKAVEQTISTLENSIARYKTEYAALISETQAIKAEMSRVQFKVDRSVKLLDSLSSERTRWEEGSRSFETQISTLVGDVLVAAAFLAYSGLYDQTFRKSMMEDWLHQLHLSGVQFKQHNPMTEYLSTADERLSWQENTLPVDDLCTENAIILKRFNRYPLIIDPSGRATEFLNRESKDRKLTVTSFLDDSFTKVLESSLRFGNPILIQDAEHLDPVLNHVLNKEYQKTGGRVLIQLGKQQIDFSPAFKLYLSTRDPSATFAPDICSRTTFVNFTVTQSSLQTQSLNEVLKSERPDVDERRSNLIKLQGEFKVHLRQLEKKLLQALNESRGNILDDDHVIETLETLKTEAAEISAKMSNTEGVMAEVEQITLQYNIIARSCSAVFAVLEQLHYLNHFYRFSLQYFLDIFHSVLRGNPHLANETNHNVRRDIIVKDLFVATFKRTALGLLQKDRITLAMLLAQASPYKMDKGLLDIILDERIEGKDVSIDQNTREEAFARAKKIPALKNKIDAVPEADWEKFFTEELAEDFVPKIWNDETEPNDRALMSLLLVKLFRLDRFVPAAERFVTLVFGSDLFDIVEDLKQTVDQVSAILPIALVSSPGFDASYKVDGLVERMRVRCTNIAMGSAEAEGSADKAIANAAQTGSWVLIKNVHLAPGWLQGVEKKMETLNPNPEFRLFLSMESSPKIPVNLLRASRVLMYEQPAGVRANMKDSMSSISTRSLKSPVERTRLYLLLSFLHAVVQERLRYAPNLGWKGFWEFNDADYECSAHVIDTWIDTAAHGRTNIAPSNIPWEMIRYLIVETYGGKIDDENDFKMLNQLVHTFLTPSAFDIGHKLVEVSHDAEDEQKDAATGGDLVVPSGTSLQEFMSWIQKLPEREPPTYLGLPANAEKLLLVGLGKSLIGNLKKVTDLLDEGEAIMAEASEAA</sequence>
<comment type="function">
    <text>Cytoplasmic dynein acts as a motor for the intracellular retrograde motility of vesicles and organelles along microtubules. Dynein has ATPase activity; the force-producing power stroke is thought to occur on release of ADP. Required to maintain uniform nuclear distribution in hyphae.</text>
</comment>
<comment type="subunit">
    <text>Consists of at least two heavy chains and a number of intermediate and light chains.</text>
</comment>
<comment type="subcellular location">
    <subcellularLocation>
        <location>Cytoplasm</location>
        <location>Cytoskeleton</location>
    </subcellularLocation>
</comment>
<comment type="domain">
    <text>Dynein heavy chains probably consist of an N-terminal stem (which binds cargo and interacts with other dynein components), and the head or motor domain. The motor contains six tandemly-linked AAA domains in the head, which form a ring. A stalk-like structure (formed by two of the coiled coil domains) protrudes between AAA 4 and AAA 5 and terminates in a microtubule-binding site. A seventh domain may also contribute to this ring; it is not clear whether the N-terminus or the C-terminus forms this extra domain. There are four well-conserved and two non-conserved ATPase sites, one per AAA domain. Probably only one of these (within AAA 1) actually hydrolyzes ATP, the others may serve a regulatory function.</text>
</comment>
<comment type="similarity">
    <text evidence="4">Belongs to the dynein heavy chain family.</text>
</comment>
<name>DYHC_NEUCR</name>
<proteinExistence type="inferred from homology"/>
<accession>P45443</accession>
<accession>Q7RVH1</accession>
<accession>V5IQJ3</accession>
<organism>
    <name type="scientific">Neurospora crassa (strain ATCC 24698 / 74-OR23-1A / CBS 708.71 / DSM 1257 / FGSC 987)</name>
    <dbReference type="NCBI Taxonomy" id="367110"/>
    <lineage>
        <taxon>Eukaryota</taxon>
        <taxon>Fungi</taxon>
        <taxon>Dikarya</taxon>
        <taxon>Ascomycota</taxon>
        <taxon>Pezizomycotina</taxon>
        <taxon>Sordariomycetes</taxon>
        <taxon>Sordariomycetidae</taxon>
        <taxon>Sordariales</taxon>
        <taxon>Sordariaceae</taxon>
        <taxon>Neurospora</taxon>
    </lineage>
</organism>
<feature type="chain" id="PRO_0000114640" description="Dynein heavy chain, cytoplasmic">
    <location>
        <begin position="1"/>
        <end position="4367"/>
    </location>
</feature>
<feature type="region of interest" description="Stem" evidence="1">
    <location>
        <begin position="1"/>
        <end position="1904"/>
    </location>
</feature>
<feature type="region of interest" description="Disordered" evidence="3">
    <location>
        <begin position="1"/>
        <end position="20"/>
    </location>
</feature>
<feature type="region of interest" description="AAA 1" evidence="1">
    <location>
        <begin position="1905"/>
        <end position="2130"/>
    </location>
</feature>
<feature type="region of interest" description="AAA 2" evidence="1">
    <location>
        <begin position="2202"/>
        <end position="2460"/>
    </location>
</feature>
<feature type="region of interest" description="AAA 3" evidence="1">
    <location>
        <begin position="2566"/>
        <end position="2815"/>
    </location>
</feature>
<feature type="region of interest" description="AAA 4" evidence="1">
    <location>
        <begin position="2909"/>
        <end position="3179"/>
    </location>
</feature>
<feature type="region of interest" description="Stalk" evidence="1">
    <location>
        <begin position="3193"/>
        <end position="3481"/>
    </location>
</feature>
<feature type="region of interest" description="AAA 5" evidence="1">
    <location>
        <begin position="3565"/>
        <end position="3794"/>
    </location>
</feature>
<feature type="region of interest" description="AAA 6" evidence="1">
    <location>
        <begin position="4003"/>
        <end position="4215"/>
    </location>
</feature>
<feature type="coiled-coil region" evidence="2">
    <location>
        <begin position="676"/>
        <end position="693"/>
    </location>
</feature>
<feature type="coiled-coil region" evidence="2">
    <location>
        <begin position="1176"/>
        <end position="1215"/>
    </location>
</feature>
<feature type="coiled-coil region" evidence="2">
    <location>
        <begin position="1327"/>
        <end position="1351"/>
    </location>
</feature>
<feature type="coiled-coil region" evidence="2">
    <location>
        <begin position="1557"/>
        <end position="1574"/>
    </location>
</feature>
<feature type="coiled-coil region" evidence="2">
    <location>
        <begin position="1637"/>
        <end position="1668"/>
    </location>
</feature>
<feature type="coiled-coil region" evidence="2">
    <location>
        <begin position="2195"/>
        <end position="2218"/>
    </location>
</feature>
<feature type="coiled-coil region" evidence="2">
    <location>
        <begin position="3193"/>
        <end position="3296"/>
    </location>
</feature>
<feature type="coiled-coil region" evidence="2">
    <location>
        <begin position="3423"/>
        <end position="3481"/>
    </location>
</feature>
<feature type="coiled-coil region" evidence="2">
    <location>
        <begin position="3778"/>
        <end position="3809"/>
    </location>
</feature>
<feature type="compositionally biased region" description="Pro residues" evidence="3">
    <location>
        <begin position="1"/>
        <end position="13"/>
    </location>
</feature>
<feature type="binding site" evidence="2">
    <location>
        <begin position="1943"/>
        <end position="1950"/>
    </location>
    <ligand>
        <name>ATP</name>
        <dbReference type="ChEBI" id="CHEBI:30616"/>
    </ligand>
</feature>
<feature type="binding site" evidence="2">
    <location>
        <begin position="2240"/>
        <end position="2247"/>
    </location>
    <ligand>
        <name>ATP</name>
        <dbReference type="ChEBI" id="CHEBI:30616"/>
    </ligand>
</feature>
<feature type="binding site" evidence="2">
    <location>
        <begin position="2605"/>
        <end position="2612"/>
    </location>
    <ligand>
        <name>ATP</name>
        <dbReference type="ChEBI" id="CHEBI:30616"/>
    </ligand>
</feature>
<feature type="binding site" evidence="2">
    <location>
        <begin position="2947"/>
        <end position="2954"/>
    </location>
    <ligand>
        <name>ATP</name>
        <dbReference type="ChEBI" id="CHEBI:30616"/>
    </ligand>
</feature>
<keyword id="KW-0067">ATP-binding</keyword>
<keyword id="KW-0175">Coiled coil</keyword>
<keyword id="KW-0963">Cytoplasm</keyword>
<keyword id="KW-0206">Cytoskeleton</keyword>
<keyword id="KW-0243">Dynein</keyword>
<keyword id="KW-0493">Microtubule</keyword>
<keyword id="KW-0505">Motor protein</keyword>
<keyword id="KW-0547">Nucleotide-binding</keyword>
<keyword id="KW-1185">Reference proteome</keyword>
<keyword id="KW-0677">Repeat</keyword>
<evidence type="ECO:0000250" key="1"/>
<evidence type="ECO:0000255" key="2"/>
<evidence type="ECO:0000256" key="3">
    <source>
        <dbReference type="SAM" id="MobiDB-lite"/>
    </source>
</evidence>
<evidence type="ECO:0000305" key="4"/>
<gene>
    <name type="primary">ro-1</name>
    <name type="ORF">NCU06976</name>
</gene>